<organism>
    <name type="scientific">Mus musculus</name>
    <name type="common">Mouse</name>
    <dbReference type="NCBI Taxonomy" id="10090"/>
    <lineage>
        <taxon>Eukaryota</taxon>
        <taxon>Metazoa</taxon>
        <taxon>Chordata</taxon>
        <taxon>Craniata</taxon>
        <taxon>Vertebrata</taxon>
        <taxon>Euteleostomi</taxon>
        <taxon>Mammalia</taxon>
        <taxon>Eutheria</taxon>
        <taxon>Euarchontoglires</taxon>
        <taxon>Glires</taxon>
        <taxon>Rodentia</taxon>
        <taxon>Myomorpha</taxon>
        <taxon>Muroidea</taxon>
        <taxon>Muridae</taxon>
        <taxon>Murinae</taxon>
        <taxon>Mus</taxon>
        <taxon>Mus</taxon>
    </lineage>
</organism>
<proteinExistence type="evidence at protein level"/>
<dbReference type="EMBL" id="V00727">
    <property type="protein sequence ID" value="CAA24105.1"/>
    <property type="molecule type" value="Genomic_DNA"/>
</dbReference>
<dbReference type="EMBL" id="J00370">
    <property type="protein sequence ID" value="AAA96699.1"/>
    <property type="molecule type" value="Genomic_DNA"/>
</dbReference>
<dbReference type="EMBL" id="BC029814">
    <property type="protein sequence ID" value="AAH29814.1"/>
    <property type="molecule type" value="mRNA"/>
</dbReference>
<dbReference type="CCDS" id="CCDS26059.1"/>
<dbReference type="PIR" id="A01343">
    <property type="entry name" value="TVMSF"/>
</dbReference>
<dbReference type="RefSeq" id="NP_034364.1">
    <property type="nucleotide sequence ID" value="NM_010234.3"/>
</dbReference>
<dbReference type="PDB" id="2WT7">
    <property type="method" value="X-ray"/>
    <property type="resolution" value="2.30 A"/>
    <property type="chains" value="A=138-200"/>
</dbReference>
<dbReference type="PDBsum" id="2WT7"/>
<dbReference type="SMR" id="P01101"/>
<dbReference type="BioGRID" id="199726">
    <property type="interactions" value="41"/>
</dbReference>
<dbReference type="ComplexPortal" id="CPX-610">
    <property type="entry name" value="AP-1 transcription factor complex FOS-JUN-NFATC2"/>
</dbReference>
<dbReference type="ComplexPortal" id="CPX-611">
    <property type="entry name" value="bZIP transcription factor complex, Fos-Jun"/>
</dbReference>
<dbReference type="DIP" id="DIP-1066N"/>
<dbReference type="ELM" id="P01101"/>
<dbReference type="FunCoup" id="P01101">
    <property type="interactions" value="2134"/>
</dbReference>
<dbReference type="IntAct" id="P01101">
    <property type="interactions" value="4"/>
</dbReference>
<dbReference type="MINT" id="P01101"/>
<dbReference type="STRING" id="10090.ENSMUSP00000021674"/>
<dbReference type="ChEMBL" id="CHEMBL4105918"/>
<dbReference type="GlyGen" id="P01101">
    <property type="glycosylation" value="3 sites, 1 O-linked glycan (3 sites)"/>
</dbReference>
<dbReference type="iPTMnet" id="P01101"/>
<dbReference type="PhosphoSitePlus" id="P01101"/>
<dbReference type="PaxDb" id="10090-ENSMUSP00000021674"/>
<dbReference type="ProteomicsDB" id="267395"/>
<dbReference type="ABCD" id="P01101">
    <property type="antibodies" value="3 sequenced antibodies"/>
</dbReference>
<dbReference type="Antibodypedia" id="4375">
    <property type="antibodies" value="1928 antibodies from 50 providers"/>
</dbReference>
<dbReference type="DNASU" id="14281"/>
<dbReference type="Ensembl" id="ENSMUST00000021674.7">
    <property type="protein sequence ID" value="ENSMUSP00000021674.7"/>
    <property type="gene ID" value="ENSMUSG00000021250.14"/>
</dbReference>
<dbReference type="GeneID" id="14281"/>
<dbReference type="KEGG" id="mmu:14281"/>
<dbReference type="UCSC" id="uc007oha.2">
    <property type="organism name" value="mouse"/>
</dbReference>
<dbReference type="AGR" id="MGI:95574"/>
<dbReference type="CTD" id="2353"/>
<dbReference type="MGI" id="MGI:95574">
    <property type="gene designation" value="Fos"/>
</dbReference>
<dbReference type="VEuPathDB" id="HostDB:ENSMUSG00000021250"/>
<dbReference type="eggNOG" id="KOG1414">
    <property type="taxonomic scope" value="Eukaryota"/>
</dbReference>
<dbReference type="GeneTree" id="ENSGT00940000159276"/>
<dbReference type="HOGENOM" id="CLU_049742_2_0_1"/>
<dbReference type="InParanoid" id="P01101"/>
<dbReference type="OMA" id="NRTHPYG"/>
<dbReference type="OrthoDB" id="5866312at2759"/>
<dbReference type="PhylomeDB" id="P01101"/>
<dbReference type="TreeFam" id="TF326301"/>
<dbReference type="Reactome" id="R-MMU-2559580">
    <property type="pathway name" value="Oxidative Stress Induced Senescence"/>
</dbReference>
<dbReference type="Reactome" id="R-MMU-2871796">
    <property type="pathway name" value="FCERI mediated MAPK activation"/>
</dbReference>
<dbReference type="Reactome" id="R-MMU-450341">
    <property type="pathway name" value="Activation of the AP-1 family of transcription factors"/>
</dbReference>
<dbReference type="BioGRID-ORCS" id="14281">
    <property type="hits" value="3 hits in 83 CRISPR screens"/>
</dbReference>
<dbReference type="ChiTaRS" id="Fos">
    <property type="organism name" value="mouse"/>
</dbReference>
<dbReference type="EvolutionaryTrace" id="P01101"/>
<dbReference type="PRO" id="PR:P01101"/>
<dbReference type="Proteomes" id="UP000000589">
    <property type="component" value="Chromosome 12"/>
</dbReference>
<dbReference type="RNAct" id="P01101">
    <property type="molecule type" value="protein"/>
</dbReference>
<dbReference type="Bgee" id="ENSMUSG00000021250">
    <property type="expression patterns" value="Expressed in granulocyte and 251 other cell types or tissues"/>
</dbReference>
<dbReference type="GO" id="GO:0005737">
    <property type="term" value="C:cytoplasm"/>
    <property type="evidence" value="ECO:0000314"/>
    <property type="project" value="CACAO"/>
</dbReference>
<dbReference type="GO" id="GO:0005829">
    <property type="term" value="C:cytosol"/>
    <property type="evidence" value="ECO:0007669"/>
    <property type="project" value="UniProtKB-SubCell"/>
</dbReference>
<dbReference type="GO" id="GO:0005783">
    <property type="term" value="C:endoplasmic reticulum"/>
    <property type="evidence" value="ECO:0000314"/>
    <property type="project" value="CACAO"/>
</dbReference>
<dbReference type="GO" id="GO:0016363">
    <property type="term" value="C:nuclear matrix"/>
    <property type="evidence" value="ECO:0007669"/>
    <property type="project" value="Ensembl"/>
</dbReference>
<dbReference type="GO" id="GO:0005654">
    <property type="term" value="C:nucleoplasm"/>
    <property type="evidence" value="ECO:0000304"/>
    <property type="project" value="Reactome"/>
</dbReference>
<dbReference type="GO" id="GO:0005634">
    <property type="term" value="C:nucleus"/>
    <property type="evidence" value="ECO:0000314"/>
    <property type="project" value="CACAO"/>
</dbReference>
<dbReference type="GO" id="GO:0032993">
    <property type="term" value="C:protein-DNA complex"/>
    <property type="evidence" value="ECO:0007669"/>
    <property type="project" value="Ensembl"/>
</dbReference>
<dbReference type="GO" id="GO:0035976">
    <property type="term" value="C:transcription factor AP-1 complex"/>
    <property type="evidence" value="ECO:0000353"/>
    <property type="project" value="ComplexPortal"/>
</dbReference>
<dbReference type="GO" id="GO:0005667">
    <property type="term" value="C:transcription regulator complex"/>
    <property type="evidence" value="ECO:0000314"/>
    <property type="project" value="MGI"/>
</dbReference>
<dbReference type="GO" id="GO:0003682">
    <property type="term" value="F:chromatin binding"/>
    <property type="evidence" value="ECO:0000314"/>
    <property type="project" value="MGI"/>
</dbReference>
<dbReference type="GO" id="GO:0003677">
    <property type="term" value="F:DNA binding"/>
    <property type="evidence" value="ECO:0000314"/>
    <property type="project" value="MGI"/>
</dbReference>
<dbReference type="GO" id="GO:0001228">
    <property type="term" value="F:DNA-binding transcription activator activity, RNA polymerase II-specific"/>
    <property type="evidence" value="ECO:0000314"/>
    <property type="project" value="NTNU_SB"/>
</dbReference>
<dbReference type="GO" id="GO:0003700">
    <property type="term" value="F:DNA-binding transcription factor activity"/>
    <property type="evidence" value="ECO:0000314"/>
    <property type="project" value="MGI"/>
</dbReference>
<dbReference type="GO" id="GO:0042802">
    <property type="term" value="F:identical protein binding"/>
    <property type="evidence" value="ECO:0007669"/>
    <property type="project" value="Ensembl"/>
</dbReference>
<dbReference type="GO" id="GO:1990841">
    <property type="term" value="F:promoter-specific chromatin binding"/>
    <property type="evidence" value="ECO:0007669"/>
    <property type="project" value="Ensembl"/>
</dbReference>
<dbReference type="GO" id="GO:0044877">
    <property type="term" value="F:protein-containing complex binding"/>
    <property type="evidence" value="ECO:0007669"/>
    <property type="project" value="Ensembl"/>
</dbReference>
<dbReference type="GO" id="GO:0070412">
    <property type="term" value="F:R-SMAD binding"/>
    <property type="evidence" value="ECO:0007669"/>
    <property type="project" value="Ensembl"/>
</dbReference>
<dbReference type="GO" id="GO:0000978">
    <property type="term" value="F:RNA polymerase II cis-regulatory region sequence-specific DNA binding"/>
    <property type="evidence" value="ECO:0000314"/>
    <property type="project" value="NTNU_SB"/>
</dbReference>
<dbReference type="GO" id="GO:0000979">
    <property type="term" value="F:RNA polymerase II core promoter sequence-specific DNA binding"/>
    <property type="evidence" value="ECO:0007669"/>
    <property type="project" value="Ensembl"/>
</dbReference>
<dbReference type="GO" id="GO:0061629">
    <property type="term" value="F:RNA polymerase II-specific DNA-binding transcription factor binding"/>
    <property type="evidence" value="ECO:0007669"/>
    <property type="project" value="Ensembl"/>
</dbReference>
<dbReference type="GO" id="GO:0001221">
    <property type="term" value="F:transcription coregulator binding"/>
    <property type="evidence" value="ECO:0007669"/>
    <property type="project" value="Ensembl"/>
</dbReference>
<dbReference type="GO" id="GO:0071277">
    <property type="term" value="P:cellular response to calcium ion"/>
    <property type="evidence" value="ECO:0000314"/>
    <property type="project" value="MGI"/>
</dbReference>
<dbReference type="GO" id="GO:0071364">
    <property type="term" value="P:cellular response to epidermal growth factor stimulus"/>
    <property type="evidence" value="ECO:0007669"/>
    <property type="project" value="Ensembl"/>
</dbReference>
<dbReference type="GO" id="GO:0071456">
    <property type="term" value="P:cellular response to hypoxia"/>
    <property type="evidence" value="ECO:0007669"/>
    <property type="project" value="Ensembl"/>
</dbReference>
<dbReference type="GO" id="GO:0071374">
    <property type="term" value="P:cellular response to parathyroid hormone stimulus"/>
    <property type="evidence" value="ECO:0007669"/>
    <property type="project" value="Ensembl"/>
</dbReference>
<dbReference type="GO" id="GO:1904628">
    <property type="term" value="P:cellular response to phorbol 13-acetate 12-myristate"/>
    <property type="evidence" value="ECO:0007669"/>
    <property type="project" value="Ensembl"/>
</dbReference>
<dbReference type="GO" id="GO:1990646">
    <property type="term" value="P:cellular response to prolactin"/>
    <property type="evidence" value="ECO:0007669"/>
    <property type="project" value="Ensembl"/>
</dbReference>
<dbReference type="GO" id="GO:0034614">
    <property type="term" value="P:cellular response to reactive oxygen species"/>
    <property type="evidence" value="ECO:0007669"/>
    <property type="project" value="Ensembl"/>
</dbReference>
<dbReference type="GO" id="GO:0071356">
    <property type="term" value="P:cellular response to tumor necrosis factor"/>
    <property type="evidence" value="ECO:0007669"/>
    <property type="project" value="Ensembl"/>
</dbReference>
<dbReference type="GO" id="GO:0034224">
    <property type="term" value="P:cellular response to zinc ion starvation"/>
    <property type="evidence" value="ECO:0007669"/>
    <property type="project" value="Ensembl"/>
</dbReference>
<dbReference type="GO" id="GO:0021987">
    <property type="term" value="P:cerebral cortex development"/>
    <property type="evidence" value="ECO:0007669"/>
    <property type="project" value="Ensembl"/>
</dbReference>
<dbReference type="GO" id="GO:0001661">
    <property type="term" value="P:conditioned taste aversion"/>
    <property type="evidence" value="ECO:0007669"/>
    <property type="project" value="Ensembl"/>
</dbReference>
<dbReference type="GO" id="GO:0007565">
    <property type="term" value="P:female pregnancy"/>
    <property type="evidence" value="ECO:0007669"/>
    <property type="project" value="Ensembl"/>
</dbReference>
<dbReference type="GO" id="GO:0072375">
    <property type="term" value="P:medium-term memory"/>
    <property type="evidence" value="ECO:0007669"/>
    <property type="project" value="Ensembl"/>
</dbReference>
<dbReference type="GO" id="GO:1903131">
    <property type="term" value="P:mononuclear cell differentiation"/>
    <property type="evidence" value="ECO:0007669"/>
    <property type="project" value="Ensembl"/>
</dbReference>
<dbReference type="GO" id="GO:0051450">
    <property type="term" value="P:myoblast proliferation"/>
    <property type="evidence" value="ECO:0007669"/>
    <property type="project" value="Ensembl"/>
</dbReference>
<dbReference type="GO" id="GO:0007399">
    <property type="term" value="P:nervous system development"/>
    <property type="evidence" value="ECO:0000315"/>
    <property type="project" value="MGI"/>
</dbReference>
<dbReference type="GO" id="GO:0003407">
    <property type="term" value="P:neural retina development"/>
    <property type="evidence" value="ECO:0007669"/>
    <property type="project" value="Ensembl"/>
</dbReference>
<dbReference type="GO" id="GO:0030182">
    <property type="term" value="P:neuron differentiation"/>
    <property type="evidence" value="ECO:0007669"/>
    <property type="project" value="Ensembl"/>
</dbReference>
<dbReference type="GO" id="GO:0030316">
    <property type="term" value="P:osteoclast differentiation"/>
    <property type="evidence" value="ECO:0000314"/>
    <property type="project" value="MGI"/>
</dbReference>
<dbReference type="GO" id="GO:1902895">
    <property type="term" value="P:positive regulation of miRNA transcription"/>
    <property type="evidence" value="ECO:0007669"/>
    <property type="project" value="Ensembl"/>
</dbReference>
<dbReference type="GO" id="GO:0045672">
    <property type="term" value="P:positive regulation of osteoclast differentiation"/>
    <property type="evidence" value="ECO:0000314"/>
    <property type="project" value="MGI"/>
</dbReference>
<dbReference type="GO" id="GO:0045944">
    <property type="term" value="P:positive regulation of transcription by RNA polymerase II"/>
    <property type="evidence" value="ECO:0000315"/>
    <property type="project" value="NTNU_SB"/>
</dbReference>
<dbReference type="GO" id="GO:0006355">
    <property type="term" value="P:regulation of DNA-templated transcription"/>
    <property type="evidence" value="ECO:0000314"/>
    <property type="project" value="MGI"/>
</dbReference>
<dbReference type="GO" id="GO:0010468">
    <property type="term" value="P:regulation of gene expression"/>
    <property type="evidence" value="ECO:0000315"/>
    <property type="project" value="MGI"/>
</dbReference>
<dbReference type="GO" id="GO:0006357">
    <property type="term" value="P:regulation of transcription by RNA polymerase II"/>
    <property type="evidence" value="ECO:0000266"/>
    <property type="project" value="ComplexPortal"/>
</dbReference>
<dbReference type="GO" id="GO:0014823">
    <property type="term" value="P:response to activity"/>
    <property type="evidence" value="ECO:0007669"/>
    <property type="project" value="Ensembl"/>
</dbReference>
<dbReference type="GO" id="GO:0051591">
    <property type="term" value="P:response to cAMP"/>
    <property type="evidence" value="ECO:0007669"/>
    <property type="project" value="Ensembl"/>
</dbReference>
<dbReference type="GO" id="GO:0051412">
    <property type="term" value="P:response to corticosterone"/>
    <property type="evidence" value="ECO:0007669"/>
    <property type="project" value="Ensembl"/>
</dbReference>
<dbReference type="GO" id="GO:0045471">
    <property type="term" value="P:response to ethanol"/>
    <property type="evidence" value="ECO:0007669"/>
    <property type="project" value="Ensembl"/>
</dbReference>
<dbReference type="GO" id="GO:0009629">
    <property type="term" value="P:response to gravity"/>
    <property type="evidence" value="ECO:0007669"/>
    <property type="project" value="Ensembl"/>
</dbReference>
<dbReference type="GO" id="GO:0035902">
    <property type="term" value="P:response to immobilization stress"/>
    <property type="evidence" value="ECO:0007669"/>
    <property type="project" value="Ensembl"/>
</dbReference>
<dbReference type="GO" id="GO:0032868">
    <property type="term" value="P:response to insulin"/>
    <property type="evidence" value="ECO:0007669"/>
    <property type="project" value="Ensembl"/>
</dbReference>
<dbReference type="GO" id="GO:0009416">
    <property type="term" value="P:response to light stimulus"/>
    <property type="evidence" value="ECO:0007669"/>
    <property type="project" value="Ensembl"/>
</dbReference>
<dbReference type="GO" id="GO:0032496">
    <property type="term" value="P:response to lipopolysaccharide"/>
    <property type="evidence" value="ECO:0007669"/>
    <property type="project" value="Ensembl"/>
</dbReference>
<dbReference type="GO" id="GO:0035994">
    <property type="term" value="P:response to muscle stretch"/>
    <property type="evidence" value="ECO:0000314"/>
    <property type="project" value="MGI"/>
</dbReference>
<dbReference type="GO" id="GO:0032570">
    <property type="term" value="P:response to progesterone"/>
    <property type="evidence" value="ECO:0007669"/>
    <property type="project" value="Ensembl"/>
</dbReference>
<dbReference type="GO" id="GO:0009636">
    <property type="term" value="P:response to toxic substance"/>
    <property type="evidence" value="ECO:0007669"/>
    <property type="project" value="Ensembl"/>
</dbReference>
<dbReference type="GO" id="GO:0009410">
    <property type="term" value="P:response to xenobiotic stimulus"/>
    <property type="evidence" value="ECO:0000314"/>
    <property type="project" value="MGI"/>
</dbReference>
<dbReference type="GO" id="GO:0035914">
    <property type="term" value="P:skeletal muscle cell differentiation"/>
    <property type="evidence" value="ECO:0000315"/>
    <property type="project" value="MGI"/>
</dbReference>
<dbReference type="GO" id="GO:0014856">
    <property type="term" value="P:skeletal muscle cell proliferation"/>
    <property type="evidence" value="ECO:0007669"/>
    <property type="project" value="Ensembl"/>
</dbReference>
<dbReference type="GO" id="GO:0060395">
    <property type="term" value="P:SMAD protein signal transduction"/>
    <property type="evidence" value="ECO:0007669"/>
    <property type="project" value="Ensembl"/>
</dbReference>
<dbReference type="GO" id="GO:0006366">
    <property type="term" value="P:transcription by RNA polymerase II"/>
    <property type="evidence" value="ECO:0000315"/>
    <property type="project" value="MGI"/>
</dbReference>
<dbReference type="GO" id="GO:0007179">
    <property type="term" value="P:transforming growth factor beta receptor signaling pathway"/>
    <property type="evidence" value="ECO:0007669"/>
    <property type="project" value="Ensembl"/>
</dbReference>
<dbReference type="CDD" id="cd14721">
    <property type="entry name" value="bZIP_Fos"/>
    <property type="match status" value="1"/>
</dbReference>
<dbReference type="FunFam" id="1.20.5.170:FF:000006">
    <property type="entry name" value="fos-related antigen 2 isoform X1"/>
    <property type="match status" value="1"/>
</dbReference>
<dbReference type="Gene3D" id="1.20.5.170">
    <property type="match status" value="1"/>
</dbReference>
<dbReference type="IDEAL" id="IID50165"/>
<dbReference type="InterPro" id="IPR000837">
    <property type="entry name" value="AP-1"/>
</dbReference>
<dbReference type="InterPro" id="IPR004827">
    <property type="entry name" value="bZIP"/>
</dbReference>
<dbReference type="InterPro" id="IPR046347">
    <property type="entry name" value="bZIP_sf"/>
</dbReference>
<dbReference type="PANTHER" id="PTHR23351">
    <property type="entry name" value="FOS TRANSCRIPTION FACTOR-RELATED"/>
    <property type="match status" value="1"/>
</dbReference>
<dbReference type="PANTHER" id="PTHR23351:SF4">
    <property type="entry name" value="PROTEIN C-FOS"/>
    <property type="match status" value="1"/>
</dbReference>
<dbReference type="Pfam" id="PF00170">
    <property type="entry name" value="bZIP_1"/>
    <property type="match status" value="1"/>
</dbReference>
<dbReference type="PRINTS" id="PR00042">
    <property type="entry name" value="LEUZIPPRFOS"/>
</dbReference>
<dbReference type="SMART" id="SM00338">
    <property type="entry name" value="BRLZ"/>
    <property type="match status" value="1"/>
</dbReference>
<dbReference type="SUPFAM" id="SSF57959">
    <property type="entry name" value="Leucine zipper domain"/>
    <property type="match status" value="1"/>
</dbReference>
<dbReference type="PROSITE" id="PS50217">
    <property type="entry name" value="BZIP"/>
    <property type="match status" value="1"/>
</dbReference>
<dbReference type="PROSITE" id="PS00036">
    <property type="entry name" value="BZIP_BASIC"/>
    <property type="match status" value="1"/>
</dbReference>
<sequence length="380" mass="40838">MMFSGFNADYEASSSRCSSASPAGDSLSYYHSPADSFSSMGSPVNTQDFCADLSVSSANFIPTVTAISTSPDLQWLVQPTLVSSVAPSQTRAPHPYGLPTQSAGAYARAGMVKTVSGGRAQSIGRRGKVEQLSPEEEEKRRIRRERNKMAAAKCRNRRRELTDTLQAETDQLEDEKSALQTEIANLLKEKEKLEFILAAHRPACKIPDDLGFPEEMSVASLDLTGGLPEASTPESEEAFTLPLLNDPEPKPSLEPVKSISNVELKAEPFDDFLFPASSRPSGSETSRSVPDVDLSGSFYAADWEPLHSNSLGMGPMVTELEPLCTPVVTCTPGCTTYTSSFVFTYPEADSFPSCAAAHRKGSSSNEPSSDSLSSPTLLAL</sequence>
<reference key="1">
    <citation type="journal article" date="1983" name="Cell">
        <title>Analysis of FBJ-MuSV provirus and c-fos (mouse) gene reveals that viral and cellular fos gene products have different carboxy termini.</title>
        <authorList>
            <person name="van Beveren C."/>
            <person name="van Straaten F."/>
            <person name="Curran T."/>
            <person name="Mueller R."/>
            <person name="Verma I.M."/>
        </authorList>
    </citation>
    <scope>NUCLEOTIDE SEQUENCE [GENOMIC DNA]</scope>
</reference>
<reference key="2">
    <citation type="journal article" date="1985" name="Proc. Natl. Acad. Sci. U.S.A.">
        <title>Removal of a 67-base-pair sequence in the noncoding region of protooncogene fos converts it to a transforming gene.</title>
        <authorList>
            <person name="Meijlink F."/>
            <person name="Curran T."/>
            <person name="Miller A.D."/>
            <person name="Verma I.M."/>
        </authorList>
    </citation>
    <scope>NUCLEOTIDE SEQUENCE [GENOMIC DNA]</scope>
</reference>
<reference key="3">
    <citation type="journal article" date="2004" name="Genome Res.">
        <title>The status, quality, and expansion of the NIH full-length cDNA project: the Mammalian Gene Collection (MGC).</title>
        <authorList>
            <consortium name="The MGC Project Team"/>
        </authorList>
    </citation>
    <scope>NUCLEOTIDE SEQUENCE [LARGE SCALE MRNA]</scope>
    <source>
        <strain>FVB/N</strain>
        <tissue>Mammary gland</tissue>
    </source>
</reference>
<reference key="4">
    <citation type="journal article" date="2001" name="J. Biol. Chem.">
        <title>Inhibition of AP-1 by the glucocorticoid-inducible protein GILZ.</title>
        <authorList>
            <person name="Mittelstadt P.R."/>
            <person name="Ashwell J.D."/>
        </authorList>
    </citation>
    <scope>INTERACTION WITH TSC22D3</scope>
</reference>
<reference key="5">
    <citation type="journal article" date="2002" name="Nat. Cell Biol.">
        <title>Molecular interpretation of ERK signal duration by immediate early gene products.</title>
        <authorList>
            <person name="Murphy L.O."/>
            <person name="Smith S."/>
            <person name="Chen R.H."/>
            <person name="Fingar D.C."/>
            <person name="Blenis J."/>
        </authorList>
    </citation>
    <scope>PHOSPHORYLATION AT THR-325; THR-331; SER-362 AND SER-374</scope>
    <scope>FUNCTION</scope>
    <scope>MUTAGENESIS OF THR-325; THR-331; PHE-343; TYR-345; SER-362 AND SER-374</scope>
</reference>
<reference key="6">
    <citation type="journal article" date="2003" name="Mol. Cell. Biol.">
        <title>Phosphorylation of the carboxyl-terminal transactivation domain of c-Fos by extracellular signal-regulated kinase mediates the transcriptional activation of AP-1 and cellular transformation induced by platelet-derived growth factor.</title>
        <authorList>
            <person name="Monje P."/>
            <person name="Marinissen M.J."/>
            <person name="Gutkind J.S."/>
        </authorList>
    </citation>
    <scope>PHOSPHORYLATION AT THR-232; THR-325; THR-331; SER-362 AND SER-374</scope>
    <scope>FUNCTION</scope>
    <scope>MUTAGENESIS OF THR-232; THR-325; THR-331 AND SER-374</scope>
</reference>
<reference key="7">
    <citation type="journal article" date="2005" name="J. Clin. Invest.">
        <title>Essential role of RSK2 in c-Fos-dependent osteosarcoma development.</title>
        <authorList>
            <person name="David J.-P."/>
            <person name="Mehic D."/>
            <person name="Bakiri L."/>
            <person name="Schilling A.F."/>
            <person name="Mandic V."/>
            <person name="Priemel M."/>
            <person name="Idarraga M.H."/>
            <person name="Reschke M.O."/>
            <person name="Hoffmann O."/>
            <person name="Amling M."/>
            <person name="Wagner E.F."/>
        </authorList>
    </citation>
    <scope>PHOSPHORYLATION AT SER-362</scope>
    <scope>FUNCTION</scope>
</reference>
<reference key="8">
    <citation type="journal article" date="2011" name="Mol. Biol. Cell">
        <title>c-Fos activates and physically interacts with specific enzymes of the pathway of synthesis of polyphosphoinositides.</title>
        <authorList>
            <person name="Alfonso Pecchio A.R."/>
            <person name="Cardozo Gizzi A.M."/>
            <person name="Renner M.L."/>
            <person name="Molina-Calavita M."/>
            <person name="Caputto B.L."/>
        </authorList>
    </citation>
    <scope>FUNCTION</scope>
</reference>
<reference key="9">
    <citation type="journal article" date="2012" name="Oncogene">
        <title>The kinase c-Src and the phosphatase TC45 coordinately regulate c-Fos tyrosine phosphorylation and c-Fos phospholipid synthesis activation capacity.</title>
        <authorList>
            <person name="Ferrero G.O."/>
            <person name="Velazquez F.N."/>
            <person name="Caputto B.L."/>
        </authorList>
    </citation>
    <scope>FUNCTION</scope>
    <scope>INTERACTION WITH CDS1 AND PI4K2A</scope>
    <scope>TYROSINE PHOSPHORYLATION BY SRC</scope>
    <scope>MUTAGENESIS OF LYS-139; ARG-144 AND ARG-146</scope>
</reference>
<reference key="10">
    <citation type="journal article" date="2017" name="Mol. Cell">
        <title>AP-1 Transcription Factors and the BAF Complex Mediate Signal-Dependent Enhancer Selection.</title>
        <authorList>
            <person name="Vierbuchen T."/>
            <person name="Ling E."/>
            <person name="Cowley C.J."/>
            <person name="Couch C.H."/>
            <person name="Wang X."/>
            <person name="Harmin D.A."/>
            <person name="Roberts C.W.M."/>
            <person name="Greenberg M.E."/>
        </authorList>
    </citation>
    <scope>INTERACTION WITH SMARCB1; SMARCC2; SMARCD1; ARID1A AND JUN</scope>
    <scope>MUTAGENESIS OF 165-LEU--LEU-193</scope>
</reference>
<name>FOS_MOUSE</name>
<comment type="function">
    <text evidence="1 7 8 9 10 11">Nuclear phosphoprotein which forms a tight but non-covalently linked complex with the JUN/AP-1 transcription factor. On TGF-beta activation, forms a multimeric SMAD3/SMAD4/JUN/FOS complex, at the AP1/SMAD-binding site to regulate TGF-beta-mediated signaling (By similarity). Has a critical function in regulating the development of cells destined to form and maintain the skeleton. It is thought to have an important role in signal transduction, cell proliferation and differentiation. In growing cells, activates phospholipid synthesis, possibly by activating CDS1 and PI4K2A. This activity requires Tyr-dephosphorylation and association with the endoplasmic reticulum.</text>
</comment>
<comment type="subunit">
    <text evidence="2 3 6 11 12">Heterodimer; with JUN (PubMed:29272704). Component of the SMAD3/SMAD4/JUN/FOS complex required for synergistic TGF-beta-mediated transcription at the AP1 promoter site (By similarity). Interacts with SMAD3; the interaction is weak even on TGF-beta activation (By similarity). Interacts with MAFB (By similarity). Interacts with TSC22D3 (via N-terminus); this interaction inhibits the binding of active AP1 to its target DNA (PubMed:11397794). Interacts with CDS1 and PI4K2A, but not with CDIPT, nor PI4K2B (PubMed:22105363). Interacts (via bZIP domain and leucine-zipper region) with the multiprotein chromatin-remodeling complexes SWI/SNF: SWI/SNF-A (BAF) subunits SMARCB1, SMARCC2 and SMARCD1 (PubMed:29272704). Interacts (via bZIP domain and leucine-zipper region) with ARID1A (PubMed:29272704).</text>
</comment>
<comment type="interaction">
    <interactant intactId="EBI-4288185">
        <id>P01101</id>
    </interactant>
    <interactant intactId="EBI-2526214">
        <id>O08537</id>
        <label>Esr2</label>
    </interactant>
    <organismsDiffer>false</organismsDiffer>
    <experiments>2</experiments>
</comment>
<comment type="interaction">
    <interactant intactId="EBI-4288185">
        <id>P01101</id>
    </interactant>
    <interactant intactId="EBI-16093217">
        <id>P54841</id>
        <label>Mafb</label>
    </interactant>
    <organismsDiffer>false</organismsDiffer>
    <experiments>4</experiments>
</comment>
<comment type="interaction">
    <interactant intactId="EBI-4288185">
        <id>P01101</id>
    </interactant>
    <interactant intactId="EBI-1994523">
        <id>P14404</id>
        <label>Mecom</label>
    </interactant>
    <organismsDiffer>false</organismsDiffer>
    <experiments>2</experiments>
</comment>
<comment type="subcellular location">
    <subcellularLocation>
        <location evidence="4">Nucleus</location>
    </subcellularLocation>
    <subcellularLocation>
        <location evidence="1">Endoplasmic reticulum</location>
    </subcellularLocation>
    <subcellularLocation>
        <location evidence="1">Cytoplasm</location>
        <location evidence="1">Cytosol</location>
    </subcellularLocation>
    <text evidence="1">In quiescent cells, present in very small amounts in the cytosol. Following induction of cell growth, first localizes to the endoplasmic reticulum and only later to the nucleus. Localization at the endoplasmic reticulum requires dephosphorylation at Tyr-10 and Tyr-30 (By similarity).</text>
</comment>
<comment type="PTM">
    <text evidence="1">Phosphorylated in the C-terminal upon stimulation by nerve growth factor (NGF) and epidermal growth factor (EGF). Phosphorylated, in vitro, by MAPK and RSK1. Phosphorylation on both Ser-362 and Ser-374 by MAPK1/2 and RSK1/2 leads to protein stabilization with phosphorylation on Ser-374 being the major site for protein stabilization on NGF stimulation. Phosphorylation on Ser-362 and Ser-374 primes further phosphorylations on Thr-325 and Thr-331 through promoting docking of MAPK to the DEF domain. Phosphorylation on Thr-232, induced by HA-RAS, activates the transcriptional activity and antagonizes sumoylation. Phosphorylation on Ser-362 by RSK2 in osteoblasts contributes to osteoblast transformation (By similarity).</text>
</comment>
<comment type="PTM">
    <text evidence="1">Constitutively sumoylated with SUMO1, SUMO2 and SUMO3. Desumoylated by SENP2. Sumoylation requires heterodimerization with JUN and is enhanced by mitogen stimulation. Sumoylation inhibits the AP-1 transcriptional activity and is, itself, inhibited by Ras-activated phosphorylation on Thr-232 (By similarity).</text>
</comment>
<comment type="PTM">
    <text evidence="7 8 9">In quiescent cells, the small amount of FOS present is phosphorylated at Tyr-10 and Tyr-30 by SRC. This Tyr-phosphorylated form is cytosolic. In growing cells, dephosphorylated by PTPN2. Dephosphorylation leads to the association with endoplasmic reticulum membranes and activation of phospholipid synthesis.</text>
</comment>
<comment type="similarity">
    <text evidence="13">Belongs to the bZIP family. Fos subfamily.</text>
</comment>
<keyword id="KW-0002">3D-structure</keyword>
<keyword id="KW-0963">Cytoplasm</keyword>
<keyword id="KW-0238">DNA-binding</keyword>
<keyword id="KW-0256">Endoplasmic reticulum</keyword>
<keyword id="KW-1017">Isopeptide bond</keyword>
<keyword id="KW-0539">Nucleus</keyword>
<keyword id="KW-0597">Phosphoprotein</keyword>
<keyword id="KW-0656">Proto-oncogene</keyword>
<keyword id="KW-1185">Reference proteome</keyword>
<keyword id="KW-0832">Ubl conjugation</keyword>
<evidence type="ECO:0000250" key="1"/>
<evidence type="ECO:0000250" key="2">
    <source>
        <dbReference type="UniProtKB" id="P01100"/>
    </source>
</evidence>
<evidence type="ECO:0000250" key="3">
    <source>
        <dbReference type="UniProtKB" id="P12841"/>
    </source>
</evidence>
<evidence type="ECO:0000255" key="4">
    <source>
        <dbReference type="PROSITE-ProRule" id="PRU00978"/>
    </source>
</evidence>
<evidence type="ECO:0000256" key="5">
    <source>
        <dbReference type="SAM" id="MobiDB-lite"/>
    </source>
</evidence>
<evidence type="ECO:0000269" key="6">
    <source>
    </source>
</evidence>
<evidence type="ECO:0000269" key="7">
    <source>
    </source>
</evidence>
<evidence type="ECO:0000269" key="8">
    <source>
    </source>
</evidence>
<evidence type="ECO:0000269" key="9">
    <source>
    </source>
</evidence>
<evidence type="ECO:0000269" key="10">
    <source>
    </source>
</evidence>
<evidence type="ECO:0000269" key="11">
    <source>
    </source>
</evidence>
<evidence type="ECO:0000269" key="12">
    <source>
    </source>
</evidence>
<evidence type="ECO:0000305" key="13"/>
<evidence type="ECO:0000312" key="14">
    <source>
        <dbReference type="MGI" id="MGI:95574"/>
    </source>
</evidence>
<evidence type="ECO:0007829" key="15">
    <source>
        <dbReference type="PDB" id="2WT7"/>
    </source>
</evidence>
<accession>P01101</accession>
<gene>
    <name type="primary">Fos</name>
</gene>
<feature type="chain" id="PRO_0000076467" description="Protein c-Fos">
    <location>
        <begin position="1"/>
        <end position="380"/>
    </location>
</feature>
<feature type="domain" description="bZIP" evidence="4">
    <location>
        <begin position="137"/>
        <end position="200"/>
    </location>
</feature>
<feature type="region of interest" description="Disordered" evidence="5">
    <location>
        <begin position="117"/>
        <end position="141"/>
    </location>
</feature>
<feature type="region of interest" description="Basic motif; required for the activation of phospholipid synthesis, but not for CDS1-binding">
    <location>
        <begin position="139"/>
        <end position="159"/>
    </location>
</feature>
<feature type="region of interest" description="Leucine-zipper" evidence="4">
    <location>
        <begin position="165"/>
        <end position="193"/>
    </location>
</feature>
<feature type="region of interest" description="Disordered" evidence="5">
    <location>
        <begin position="354"/>
        <end position="380"/>
    </location>
</feature>
<feature type="compositionally biased region" description="Low complexity" evidence="5">
    <location>
        <begin position="362"/>
        <end position="374"/>
    </location>
</feature>
<feature type="modified residue" description="Phosphotyrosine; by SRC" evidence="2">
    <location>
        <position position="10"/>
    </location>
</feature>
<feature type="modified residue" description="Phosphotyrosine; by SRC" evidence="2">
    <location>
        <position position="30"/>
    </location>
</feature>
<feature type="modified residue" description="Phosphothreonine" evidence="8">
    <location>
        <position position="232"/>
    </location>
</feature>
<feature type="modified residue" description="Phosphothreonine; by MAPK1 and MAPK3" evidence="7 8">
    <location>
        <position position="325"/>
    </location>
</feature>
<feature type="modified residue" description="Phosphothreonine; by MAPK1 and MAPK3" evidence="7 8">
    <location>
        <position position="331"/>
    </location>
</feature>
<feature type="modified residue" description="Phosphoserine; by MAPK1, MAPK3 and RPS6KA3" evidence="7 8 9">
    <location>
        <position position="362"/>
    </location>
</feature>
<feature type="modified residue" description="Phosphoserine; by MAPK1 and MAPK3" evidence="7 8">
    <location>
        <position position="374"/>
    </location>
</feature>
<feature type="cross-link" description="Glycyl lysine isopeptide (Lys-Gly) (interchain with G-Cter in SUMO2)" evidence="2">
    <location>
        <position position="113"/>
    </location>
</feature>
<feature type="cross-link" description="Glycyl lysine isopeptide (Lys-Gly) (interchain with G-Cter in SUMO2)" evidence="2">
    <location>
        <position position="128"/>
    </location>
</feature>
<feature type="cross-link" description="Glycyl lysine isopeptide (Lys-Gly) (interchain with G-Cter in SUMO); alternate" evidence="1">
    <location>
        <position position="265"/>
    </location>
</feature>
<feature type="cross-link" description="Glycyl lysine isopeptide (Lys-Gly) (interchain with G-Cter in SUMO2); alternate" evidence="2">
    <location>
        <position position="265"/>
    </location>
</feature>
<feature type="mutagenesis site" description="No effect on activation of phospholipid synthesis." evidence="11">
    <original>K</original>
    <variation>N</variation>
    <location>
        <position position="139"/>
    </location>
</feature>
<feature type="mutagenesis site" description="No effect on activation of phospholipid synthesis, nor on CDS1-binding." evidence="11">
    <original>R</original>
    <variation>N</variation>
    <location>
        <position position="144"/>
    </location>
</feature>
<feature type="mutagenesis site" description="Complete loss of activation of phospholipid synthesis. No effect on CDS1-binding." evidence="11">
    <original>R</original>
    <variation>N</variation>
    <location>
        <position position="146"/>
    </location>
</feature>
<feature type="mutagenesis site" description="Disrupts interaction with SMARCB1, SMARCD1, ARID1A and JUN." evidence="12">
    <original>LQAETDQLEDEKSALQTEIANLLKEKEKL</original>
    <variation>AQAETDQAEDEKSAAQTEIANAAKEKEKA</variation>
    <location>
        <begin position="165"/>
        <end position="193"/>
    </location>
</feature>
<feature type="mutagenesis site" description="No effect on PDGF-stimulated enhancement of transcriptional activity. Completely abolishes PDGF-stimulated enhancement of transcriptional activity; when associated with A-325; A-331 and A-374." evidence="8">
    <original>T</original>
    <variation>A</variation>
    <location>
        <position position="232"/>
    </location>
</feature>
<feature type="mutagenesis site" description="Almost no EGF-mediated phosphorylation, greatly reduced cellular transformation, and reduced AP1 activity by 20%; when associated with A-331. No effect on PDGF-stimulated enhancement of transcriptional activity. Completely abolishes PDGF-stimulated enhancement of transcriptional activity; when associated with A-232; A-331 and A-374." evidence="7 8">
    <original>T</original>
    <variation>A</variation>
    <location>
        <position position="325"/>
    </location>
</feature>
<feature type="mutagenesis site" description="Almost no EGF-mediated phosphorylation, greatly reduced cellular transformation, and reduced AP1 activity by 20%; when associated with A-325. No effect on PDGF-stimulated enhancement of transcriptional activity. Completely abolishes PDGF-stimulated enhancement of transcriptional activity; when associated with A-232; A-325;and A-374." evidence="7 8">
    <original>T</original>
    <variation>A</variation>
    <location>
        <position position="331"/>
    </location>
</feature>
<feature type="mutagenesis site" description="Reduced phosphorylation by ERK. Reduced AP1 activity by 65%." evidence="7">
    <original>F</original>
    <variation>A</variation>
    <location>
        <position position="343"/>
    </location>
</feature>
<feature type="mutagenesis site" description="Reduced phosphorylation by ERK." evidence="7">
    <original>Y</original>
    <variation>A</variation>
    <location>
        <position position="345"/>
    </location>
</feature>
<feature type="mutagenesis site" description="Enhanced EGF- and RSK-mediated transformation; when associated with D-374." evidence="7">
    <original>S</original>
    <variation>D</variation>
    <location>
        <position position="362"/>
    </location>
</feature>
<feature type="mutagenesis site" description="Increased enhancement of EGF- and RSK-mediated transformation; when associated with E-374." evidence="7">
    <original>S</original>
    <variation>E</variation>
    <location>
        <position position="362"/>
    </location>
</feature>
<feature type="mutagenesis site" description="No effect on PDGF-stimulated enhancement of transcriptional activity. Completely abolishes PDGF-stimulated enhancement of transcriptional activity; when associated with A-232; A-325 and A-331." evidence="7 8">
    <original>S</original>
    <variation>A</variation>
    <location>
        <position position="374"/>
    </location>
</feature>
<feature type="mutagenesis site" description="Enhanced EGF- and RSK-mediated transformation; when associated with D-362." evidence="7 8">
    <original>S</original>
    <variation>D</variation>
    <location>
        <position position="374"/>
    </location>
</feature>
<feature type="mutagenesis site" description="Enhanced EGF- and RSK-mediated transformation; when associated with E-362." evidence="7 8">
    <original>S</original>
    <variation>E</variation>
    <location>
        <position position="374"/>
    </location>
</feature>
<feature type="helix" evidence="15">
    <location>
        <begin position="139"/>
        <end position="199"/>
    </location>
</feature>
<protein>
    <recommendedName>
        <fullName evidence="13">Protein c-Fos</fullName>
    </recommendedName>
    <alternativeName>
        <fullName>Cellular oncogene fos</fullName>
    </alternativeName>
    <alternativeName>
        <fullName evidence="14">FBJ osteosarcoma oncogene</fullName>
    </alternativeName>
    <alternativeName>
        <fullName evidence="13">Transcription factor AP-1 subunit c-Fos</fullName>
    </alternativeName>
</protein>